<keyword id="KW-0007">Acetylation</keyword>
<keyword id="KW-0010">Activator</keyword>
<keyword id="KW-0012">Acyltransferase</keyword>
<keyword id="KW-0025">Alternative splicing</keyword>
<keyword id="KW-0963">Cytoplasm</keyword>
<keyword id="KW-0539">Nucleus</keyword>
<keyword id="KW-0597">Phosphoprotein</keyword>
<keyword id="KW-1185">Reference proteome</keyword>
<keyword id="KW-0677">Repeat</keyword>
<keyword id="KW-0804">Transcription</keyword>
<keyword id="KW-0805">Transcription regulation</keyword>
<keyword id="KW-0808">Transferase</keyword>
<protein>
    <recommendedName>
        <fullName>Nuclear receptor coactivator 3</fullName>
        <ecNumber>2.3.1.48</ecNumber>
    </recommendedName>
    <alternativeName>
        <fullName>Retinoid X receptor-interacting coactivator xSRC-3</fullName>
    </alternativeName>
</protein>
<evidence type="ECO:0000250" key="1"/>
<evidence type="ECO:0000255" key="2">
    <source>
        <dbReference type="PROSITE-ProRule" id="PRU00140"/>
    </source>
</evidence>
<evidence type="ECO:0000255" key="3">
    <source>
        <dbReference type="PROSITE-ProRule" id="PRU00981"/>
    </source>
</evidence>
<evidence type="ECO:0000256" key="4">
    <source>
        <dbReference type="SAM" id="MobiDB-lite"/>
    </source>
</evidence>
<evidence type="ECO:0000269" key="5">
    <source>
    </source>
</evidence>
<evidence type="ECO:0000305" key="6"/>
<reference key="1">
    <citation type="journal article" date="1998" name="Mol. Endocrinol.">
        <title>Molecular cloning of xSRC-3, a novel transcription coactivator from Xenopus, that is related to AIB1, p/CIP and TIF2.</title>
        <authorList>
            <person name="Kim H.-J."/>
            <person name="Lee S.-K."/>
            <person name="Na S.-Y."/>
            <person name="Choi H.-S."/>
            <person name="Lee J.W."/>
        </authorList>
    </citation>
    <scope>NUCLEOTIDE SEQUENCE [MRNA]</scope>
    <scope>INTERACTION WITH RXRA; THRA AND EP300</scope>
    <scope>MUTAGENESIS OF LEU-622; LEU-683 AND LEU-739</scope>
    <source>
        <tissue>Oocyte</tissue>
    </source>
</reference>
<proteinExistence type="evidence at protein level"/>
<accession>O57539</accession>
<gene>
    <name type="primary">ncoa3</name>
</gene>
<name>NCOA3_XENLA</name>
<feature type="chain" id="PRO_0000094409" description="Nuclear receptor coactivator 3">
    <location>
        <begin position="1"/>
        <end position="1391"/>
    </location>
</feature>
<feature type="domain" description="bHLH" evidence="3">
    <location>
        <begin position="27"/>
        <end position="84"/>
    </location>
</feature>
<feature type="domain" description="PAS" evidence="2">
    <location>
        <begin position="112"/>
        <end position="182"/>
    </location>
</feature>
<feature type="region of interest" description="Disordered" evidence="4">
    <location>
        <begin position="1"/>
        <end position="40"/>
    </location>
</feature>
<feature type="region of interest" description="Disordered" evidence="4">
    <location>
        <begin position="85"/>
        <end position="107"/>
    </location>
</feature>
<feature type="region of interest" description="Disordered" evidence="4">
    <location>
        <begin position="636"/>
        <end position="666"/>
    </location>
</feature>
<feature type="region of interest" description="Disordered" evidence="4">
    <location>
        <begin position="816"/>
        <end position="880"/>
    </location>
</feature>
<feature type="region of interest" description="Acetyltransferase">
    <location>
        <begin position="1088"/>
        <end position="1274"/>
    </location>
</feature>
<feature type="region of interest" description="Disordered" evidence="4">
    <location>
        <begin position="1242"/>
        <end position="1279"/>
    </location>
</feature>
<feature type="region of interest" description="Disordered" evidence="4">
    <location>
        <begin position="1299"/>
        <end position="1321"/>
    </location>
</feature>
<feature type="short sequence motif" description="LXXLL motif 1">
    <location>
        <begin position="680"/>
        <end position="684"/>
    </location>
</feature>
<feature type="short sequence motif" description="LXXLL motif 2">
    <location>
        <begin position="736"/>
        <end position="740"/>
    </location>
</feature>
<feature type="short sequence motif" description="LXXLL motif 3">
    <location>
        <begin position="1048"/>
        <end position="1052"/>
    </location>
</feature>
<feature type="compositionally biased region" description="Polar residues" evidence="4">
    <location>
        <begin position="857"/>
        <end position="870"/>
    </location>
</feature>
<feature type="compositionally biased region" description="Polar residues" evidence="4">
    <location>
        <begin position="1300"/>
        <end position="1321"/>
    </location>
</feature>
<feature type="modified residue" description="N6-acetyllysine" evidence="1">
    <location>
        <position position="614"/>
    </location>
</feature>
<feature type="modified residue" description="N6-acetyllysine" evidence="1">
    <location>
        <position position="617"/>
    </location>
</feature>
<feature type="modified residue" description="N6-acetyllysine" evidence="1">
    <location>
        <position position="618"/>
    </location>
</feature>
<feature type="mutagenesis site" description="Weakly impairs interaction with nuclear receptors." evidence="5">
    <original>L</original>
    <variation>A</variation>
    <location>
        <position position="622"/>
    </location>
</feature>
<feature type="mutagenesis site" description="Strongly impairs interaction with nuclear receptors." evidence="5">
    <original>L</original>
    <variation>A</variation>
    <location>
        <position position="683"/>
    </location>
</feature>
<feature type="mutagenesis site" description="Strongly impairs interaction with nuclear receptors." evidence="5">
    <original>L</original>
    <variation>A</variation>
    <location>
        <position position="739"/>
    </location>
</feature>
<sequence>MSGLGENSLDPLASETRKRKPSSCDTPGPGLTCSGEKRRREQESKYIEELADLISANLSDIDNFNVKPDKCAILKETVRQIRQIKEQGKASSNDDDVQKADVSSTGQGVIDKDSLGPLLLQALDGFLYVVNREGSIVFVSENVTQYLQYKQEDLVNTSVYSILHEEDRKDFLKNLPKSTVNGVPWFSETPRQKSHTFNCRMLVKTSHDHLEDGSNLDARQRYETMQCFALSQPRAMIEEGEDLQSCMICVARRITTAERAFSANPESFITRHDLTGKVVNIDANSLRSSMRPGFEDTIRRCIQRFLFHSEGQPWTYKRHYQEAYVHGLSETPLYRFSLADGTMVTAQTKSKLFRNPVTNDPHGFVSTHFLQREQNGYRPNPNPMAQGIRPQMNPNLPNTMNSMPPQAMQQQNRNYGMGDPNSMAQMQGMRYKSPGNMAPVNQAPGVQQSPYQNNSNYGLNMNSPPHGSPGMNANQPNLMVSPRNRASPKMASNQFSPVPGMNSPMGSSGNAGGGSFSSSSLSALHAISEGVGSSLLSSLSSPGQKVENNSNMNMPQQGKICNQDCKSPSGLYCEQGQVESSVCQSSGREHLGEKDVKENIFEGSESQRSQAESKGHKKLLQLLTCFTEERGQSLMSSSSMDCKDSSNVTSPSGVSSSTSIGVSSTSNLHGSMLQEKHRILHKLLQNGNSPAEVAKITAEATGKDVFQETVSSAPCTEATVKREQLSPKKKENNALLRHLLDKDDWKDPLAKDIKPKVEHMDIKMGSCSSSNVPTSSQDKEVKIKTEPGEEVPGDLDNLDAILGDLAGSDFYSNSMSSRASDLGPKQPVFQDSPTLAMRSPDSMQGSRPPFNRAMSLDSRSSTPPVRNVNSFPMLPKQGMIGSPRMMDGQDNFGVMMGSGPNRSMNQHPGGDWAMQNSAVNRLEPPNVGSVGRPGPDYSSAMTRPAMGGNMPGLLTRSNSIPGSRPVMQQQQHILPMRPNDMAMSMGSNPYGQQAPSNPPGSWPDAIMMNQGRGGAQNRQLGRNSLDDLLCPPSTVEGQTDEIALLDQLHTLLSNTDATGLEEIDRALGIPDLVSQGQALEPQPDSYQPQGSPVMIDQKPPMYGQHYAGQGAAMSAGGFNNMQGQHPPFNTVMGQMNQQQGMHPLQGMHPRANLIRPRNNIPKQLRMQLQQRLQGQQFLNQNRQALEMKVDPMNPGGAGVMRPVMQTPVSQQGFLNAQMVAQKNRELISHQIRQHRMAMMMQQQQGQPQAFSPPPNVTASASMDNPLGGPPMPQAPPQQFSYPPNYGINQQTDPTFGRVSSPPNAMMSSRMAPSQNPHPQTTQMYPSPDMKGWPSGNMARPNSFPQQQYSHQTNPATYNMMHMNGNGNHMGQMNINSLPMSGMPMGPDQKYC</sequence>
<dbReference type="EC" id="2.3.1.48"/>
<dbReference type="EMBL" id="AF044080">
    <property type="protein sequence ID" value="AAC12927.1"/>
    <property type="molecule type" value="mRNA"/>
</dbReference>
<dbReference type="RefSeq" id="NP_001081732.1">
    <molecule id="O57539-1"/>
    <property type="nucleotide sequence ID" value="NM_001088263.1"/>
</dbReference>
<dbReference type="GeneID" id="398021"/>
<dbReference type="KEGG" id="xla:398021"/>
<dbReference type="AGR" id="Xenbase:XB-GENE-865628"/>
<dbReference type="CTD" id="398021"/>
<dbReference type="Xenbase" id="XB-GENE-865628">
    <property type="gene designation" value="ncoa3.S"/>
</dbReference>
<dbReference type="OrthoDB" id="10035882at2759"/>
<dbReference type="Proteomes" id="UP000186698">
    <property type="component" value="Chromosome 9_10S"/>
</dbReference>
<dbReference type="Bgee" id="398021">
    <property type="expression patterns" value="Expressed in camera-type eye and 19 other cell types or tissues"/>
</dbReference>
<dbReference type="GO" id="GO:0005737">
    <property type="term" value="C:cytoplasm"/>
    <property type="evidence" value="ECO:0007669"/>
    <property type="project" value="UniProtKB-SubCell"/>
</dbReference>
<dbReference type="GO" id="GO:0005634">
    <property type="term" value="C:nucleus"/>
    <property type="evidence" value="ECO:0000318"/>
    <property type="project" value="GO_Central"/>
</dbReference>
<dbReference type="GO" id="GO:0004402">
    <property type="term" value="F:histone acetyltransferase activity"/>
    <property type="evidence" value="ECO:0007669"/>
    <property type="project" value="UniProtKB-EC"/>
</dbReference>
<dbReference type="GO" id="GO:0016922">
    <property type="term" value="F:nuclear receptor binding"/>
    <property type="evidence" value="ECO:0000318"/>
    <property type="project" value="GO_Central"/>
</dbReference>
<dbReference type="GO" id="GO:0046983">
    <property type="term" value="F:protein dimerization activity"/>
    <property type="evidence" value="ECO:0007669"/>
    <property type="project" value="InterPro"/>
</dbReference>
<dbReference type="GO" id="GO:0003713">
    <property type="term" value="F:transcription coactivator activity"/>
    <property type="evidence" value="ECO:0000318"/>
    <property type="project" value="GO_Central"/>
</dbReference>
<dbReference type="GO" id="GO:0032870">
    <property type="term" value="P:cellular response to hormone stimulus"/>
    <property type="evidence" value="ECO:0000318"/>
    <property type="project" value="GO_Central"/>
</dbReference>
<dbReference type="GO" id="GO:0045944">
    <property type="term" value="P:positive regulation of transcription by RNA polymerase II"/>
    <property type="evidence" value="ECO:0000318"/>
    <property type="project" value="GO_Central"/>
</dbReference>
<dbReference type="CDD" id="cd18949">
    <property type="entry name" value="bHLH-PAS_NCoA3_SRC3"/>
    <property type="match status" value="1"/>
</dbReference>
<dbReference type="CDD" id="cd00130">
    <property type="entry name" value="PAS"/>
    <property type="match status" value="1"/>
</dbReference>
<dbReference type="FunFam" id="3.30.450.20:FF:000008">
    <property type="entry name" value="Nuclear receptor coactivator"/>
    <property type="match status" value="1"/>
</dbReference>
<dbReference type="FunFam" id="4.10.280.10:FF:000008">
    <property type="entry name" value="Nuclear receptor coactivator"/>
    <property type="match status" value="1"/>
</dbReference>
<dbReference type="FunFam" id="3.30.450.20:FF:000027">
    <property type="entry name" value="Nuclear receptor coactivator 3"/>
    <property type="match status" value="1"/>
</dbReference>
<dbReference type="Gene3D" id="6.10.140.410">
    <property type="match status" value="1"/>
</dbReference>
<dbReference type="Gene3D" id="4.10.280.10">
    <property type="entry name" value="Helix-loop-helix DNA-binding domain"/>
    <property type="match status" value="1"/>
</dbReference>
<dbReference type="Gene3D" id="3.30.450.20">
    <property type="entry name" value="PAS domain"/>
    <property type="match status" value="2"/>
</dbReference>
<dbReference type="InterPro" id="IPR011598">
    <property type="entry name" value="bHLH_dom"/>
</dbReference>
<dbReference type="InterPro" id="IPR056193">
    <property type="entry name" value="bHLH_NCOA1-3"/>
</dbReference>
<dbReference type="InterPro" id="IPR036638">
    <property type="entry name" value="HLH_DNA-bd_sf"/>
</dbReference>
<dbReference type="InterPro" id="IPR010011">
    <property type="entry name" value="NCO_DUF1518"/>
</dbReference>
<dbReference type="InterPro" id="IPR032565">
    <property type="entry name" value="NCOA2/3_DUF4927"/>
</dbReference>
<dbReference type="InterPro" id="IPR056194">
    <property type="entry name" value="NCOA3_bHLH"/>
</dbReference>
<dbReference type="InterPro" id="IPR009110">
    <property type="entry name" value="Nuc_rcpt_coact"/>
</dbReference>
<dbReference type="InterPro" id="IPR014920">
    <property type="entry name" value="Nuc_rcpt_coact_Ncoa-typ"/>
</dbReference>
<dbReference type="InterPro" id="IPR037077">
    <property type="entry name" value="Nuc_rcpt_coact_Ncoa_int_sf"/>
</dbReference>
<dbReference type="InterPro" id="IPR017426">
    <property type="entry name" value="Nuclear_rcpt_coactivator"/>
</dbReference>
<dbReference type="InterPro" id="IPR000014">
    <property type="entry name" value="PAS"/>
</dbReference>
<dbReference type="InterPro" id="IPR035965">
    <property type="entry name" value="PAS-like_dom_sf"/>
</dbReference>
<dbReference type="InterPro" id="IPR013767">
    <property type="entry name" value="PAS_fold"/>
</dbReference>
<dbReference type="InterPro" id="IPR014935">
    <property type="entry name" value="SRC/p160_LXXLL"/>
</dbReference>
<dbReference type="PANTHER" id="PTHR10684">
    <property type="entry name" value="NUCLEAR RECEPTOR COACTIVATOR"/>
    <property type="match status" value="1"/>
</dbReference>
<dbReference type="PANTHER" id="PTHR10684:SF3">
    <property type="entry name" value="NUCLEAR RECEPTOR COACTIVATOR 3"/>
    <property type="match status" value="1"/>
</dbReference>
<dbReference type="Pfam" id="PF23172">
    <property type="entry name" value="bHLH_NCOA"/>
    <property type="match status" value="1"/>
</dbReference>
<dbReference type="Pfam" id="PF07469">
    <property type="entry name" value="DUF1518"/>
    <property type="match status" value="1"/>
</dbReference>
<dbReference type="Pfam" id="PF16279">
    <property type="entry name" value="DUF4927"/>
    <property type="match status" value="1"/>
</dbReference>
<dbReference type="Pfam" id="PF16665">
    <property type="entry name" value="NCOA_u2"/>
    <property type="match status" value="1"/>
</dbReference>
<dbReference type="Pfam" id="PF08815">
    <property type="entry name" value="Nuc_rec_co-act"/>
    <property type="match status" value="1"/>
</dbReference>
<dbReference type="Pfam" id="PF00989">
    <property type="entry name" value="PAS"/>
    <property type="match status" value="1"/>
</dbReference>
<dbReference type="Pfam" id="PF14598">
    <property type="entry name" value="PAS_11"/>
    <property type="match status" value="1"/>
</dbReference>
<dbReference type="Pfam" id="PF08832">
    <property type="entry name" value="SRC-1"/>
    <property type="match status" value="1"/>
</dbReference>
<dbReference type="PIRSF" id="PIRSF038181">
    <property type="entry name" value="Nuclear_receptor_coactivator"/>
    <property type="match status" value="1"/>
</dbReference>
<dbReference type="SMART" id="SM01151">
    <property type="entry name" value="DUF1518"/>
    <property type="match status" value="1"/>
</dbReference>
<dbReference type="SMART" id="SM00353">
    <property type="entry name" value="HLH"/>
    <property type="match status" value="1"/>
</dbReference>
<dbReference type="SMART" id="SM00091">
    <property type="entry name" value="PAS"/>
    <property type="match status" value="1"/>
</dbReference>
<dbReference type="SUPFAM" id="SSF47459">
    <property type="entry name" value="HLH, helix-loop-helix DNA-binding domain"/>
    <property type="match status" value="1"/>
</dbReference>
<dbReference type="SUPFAM" id="SSF69125">
    <property type="entry name" value="Nuclear receptor coactivator interlocking domain"/>
    <property type="match status" value="1"/>
</dbReference>
<dbReference type="SUPFAM" id="SSF55785">
    <property type="entry name" value="PYP-like sensor domain (PAS domain)"/>
    <property type="match status" value="2"/>
</dbReference>
<dbReference type="PROSITE" id="PS50888">
    <property type="entry name" value="BHLH"/>
    <property type="match status" value="1"/>
</dbReference>
<dbReference type="PROSITE" id="PS50112">
    <property type="entry name" value="PAS"/>
    <property type="match status" value="1"/>
</dbReference>
<comment type="function">
    <text>Nuclear receptor coactivator that directly binds nuclear receptors and stimulates the transcriptional activities in a hormone-dependent fashion. Plays a central role in creating a multisubunit coactivator complex, probably via remodeling of chromatin. Involved in the coactivation of different nuclear receptors, such as retinoids (RAR and RXR), thyroid hormone (TR) and orphan nuclear receptor (hepatocyte nuclear receptor 4 (HNF4) and constitutive androstane receptor (CAR)). Displays histone acetyltransferase activity.</text>
</comment>
<comment type="catalytic activity">
    <reaction>
        <text>L-lysyl-[protein] + acetyl-CoA = N(6)-acetyl-L-lysyl-[protein] + CoA + H(+)</text>
        <dbReference type="Rhea" id="RHEA:45948"/>
        <dbReference type="Rhea" id="RHEA-COMP:9752"/>
        <dbReference type="Rhea" id="RHEA-COMP:10731"/>
        <dbReference type="ChEBI" id="CHEBI:15378"/>
        <dbReference type="ChEBI" id="CHEBI:29969"/>
        <dbReference type="ChEBI" id="CHEBI:57287"/>
        <dbReference type="ChEBI" id="CHEBI:57288"/>
        <dbReference type="ChEBI" id="CHEBI:61930"/>
        <dbReference type="EC" id="2.3.1.48"/>
    </reaction>
</comment>
<comment type="subunit">
    <text evidence="5">Interacts with the histone acetyltransferase protein EP300.</text>
</comment>
<comment type="interaction">
    <interactant intactId="EBI-301587">
        <id>O57539</id>
    </interactant>
    <interactant intactId="EBI-301595">
        <id>O57539-1</id>
        <label>ncoa3</label>
    </interactant>
    <organismsDiffer>false</organismsDiffer>
    <experiments>2</experiments>
</comment>
<comment type="subcellular location">
    <subcellularLocation>
        <location evidence="1">Cytoplasm</location>
    </subcellularLocation>
    <subcellularLocation>
        <location evidence="3">Nucleus</location>
    </subcellularLocation>
    <text evidence="1">Mainly cytoplasmic and weakly nuclear.</text>
</comment>
<comment type="alternative products">
    <event type="alternative splicing"/>
    <isoform>
        <id>O57539-1</id>
        <name>1</name>
        <sequence type="displayed"/>
    </isoform>
    <text>A number of isoforms may be produced.</text>
</comment>
<comment type="tissue specificity">
    <text>Highly expressed in liver and in early stages of oocyte development.</text>
</comment>
<comment type="developmental stage">
    <text>Expressed only in early stages of oocyte development. Expression is more prominent in stage I, strongly decreases in stage II and then, gradually disappears.</text>
</comment>
<comment type="domain">
    <text>Contains three Leu-Xaa-Xaa-Leu-Leu (LXXLL) motifs. Motifs 1 and 2 are essential for the association with nuclear receptors, and constitute the RID domain (Receptor-interacting domain).</text>
</comment>
<comment type="PTM">
    <text evidence="1">Phosphorylated and acetylated.</text>
</comment>
<comment type="similarity">
    <text evidence="6">Belongs to the SRC/p160 nuclear receptor coactivator family.</text>
</comment>
<organism>
    <name type="scientific">Xenopus laevis</name>
    <name type="common">African clawed frog</name>
    <dbReference type="NCBI Taxonomy" id="8355"/>
    <lineage>
        <taxon>Eukaryota</taxon>
        <taxon>Metazoa</taxon>
        <taxon>Chordata</taxon>
        <taxon>Craniata</taxon>
        <taxon>Vertebrata</taxon>
        <taxon>Euteleostomi</taxon>
        <taxon>Amphibia</taxon>
        <taxon>Batrachia</taxon>
        <taxon>Anura</taxon>
        <taxon>Pipoidea</taxon>
        <taxon>Pipidae</taxon>
        <taxon>Xenopodinae</taxon>
        <taxon>Xenopus</taxon>
        <taxon>Xenopus</taxon>
    </lineage>
</organism>